<proteinExistence type="inferred from homology"/>
<protein>
    <recommendedName>
        <fullName evidence="1">L-fucose mutarotase</fullName>
        <ecNumber evidence="1">5.1.3.29</ecNumber>
    </recommendedName>
    <alternativeName>
        <fullName evidence="1">Fucose 1-epimerase</fullName>
    </alternativeName>
    <alternativeName>
        <fullName evidence="1">Type-2 mutarotase</fullName>
    </alternativeName>
</protein>
<name>FUCM_SALTI</name>
<reference key="1">
    <citation type="journal article" date="2001" name="Nature">
        <title>Complete genome sequence of a multiple drug resistant Salmonella enterica serovar Typhi CT18.</title>
        <authorList>
            <person name="Parkhill J."/>
            <person name="Dougan G."/>
            <person name="James K.D."/>
            <person name="Thomson N.R."/>
            <person name="Pickard D."/>
            <person name="Wain J."/>
            <person name="Churcher C.M."/>
            <person name="Mungall K.L."/>
            <person name="Bentley S.D."/>
            <person name="Holden M.T.G."/>
            <person name="Sebaihia M."/>
            <person name="Baker S."/>
            <person name="Basham D."/>
            <person name="Brooks K."/>
            <person name="Chillingworth T."/>
            <person name="Connerton P."/>
            <person name="Cronin A."/>
            <person name="Davis P."/>
            <person name="Davies R.M."/>
            <person name="Dowd L."/>
            <person name="White N."/>
            <person name="Farrar J."/>
            <person name="Feltwell T."/>
            <person name="Hamlin N."/>
            <person name="Haque A."/>
            <person name="Hien T.T."/>
            <person name="Holroyd S."/>
            <person name="Jagels K."/>
            <person name="Krogh A."/>
            <person name="Larsen T.S."/>
            <person name="Leather S."/>
            <person name="Moule S."/>
            <person name="O'Gaora P."/>
            <person name="Parry C."/>
            <person name="Quail M.A."/>
            <person name="Rutherford K.M."/>
            <person name="Simmonds M."/>
            <person name="Skelton J."/>
            <person name="Stevens K."/>
            <person name="Whitehead S."/>
            <person name="Barrell B.G."/>
        </authorList>
    </citation>
    <scope>NUCLEOTIDE SEQUENCE [LARGE SCALE GENOMIC DNA]</scope>
    <source>
        <strain>CT18</strain>
    </source>
</reference>
<reference key="2">
    <citation type="journal article" date="2003" name="J. Bacteriol.">
        <title>Comparative genomics of Salmonella enterica serovar Typhi strains Ty2 and CT18.</title>
        <authorList>
            <person name="Deng W."/>
            <person name="Liou S.-R."/>
            <person name="Plunkett G. III"/>
            <person name="Mayhew G.F."/>
            <person name="Rose D.J."/>
            <person name="Burland V."/>
            <person name="Kodoyianni V."/>
            <person name="Schwartz D.C."/>
            <person name="Blattner F.R."/>
        </authorList>
    </citation>
    <scope>NUCLEOTIDE SEQUENCE [LARGE SCALE GENOMIC DNA]</scope>
    <source>
        <strain>ATCC 700931 / Ty2</strain>
    </source>
</reference>
<sequence length="140" mass="15254">MLKTISPLISPTLLKVLAEMGHGDEIIFSDAHFPAHSLGPQVIRADGLSVSDLLRAIIPLFELDSYAPPLVMMAAVEGDTLDPSVEARYRDALSLEAPCPDIVRIDRYAFYERAQKAFAIVITGECAKYGNILLKKGVTP</sequence>
<keyword id="KW-0119">Carbohydrate metabolism</keyword>
<keyword id="KW-0963">Cytoplasm</keyword>
<keyword id="KW-0294">Fucose metabolism</keyword>
<keyword id="KW-0413">Isomerase</keyword>
<organism>
    <name type="scientific">Salmonella typhi</name>
    <dbReference type="NCBI Taxonomy" id="90370"/>
    <lineage>
        <taxon>Bacteria</taxon>
        <taxon>Pseudomonadati</taxon>
        <taxon>Pseudomonadota</taxon>
        <taxon>Gammaproteobacteria</taxon>
        <taxon>Enterobacterales</taxon>
        <taxon>Enterobacteriaceae</taxon>
        <taxon>Salmonella</taxon>
    </lineage>
</organism>
<comment type="function">
    <text evidence="1">Involved in the anomeric conversion of L-fucose.</text>
</comment>
<comment type="catalytic activity">
    <reaction evidence="1">
        <text>alpha-L-fucose = beta-L-fucose</text>
        <dbReference type="Rhea" id="RHEA:25580"/>
        <dbReference type="ChEBI" id="CHEBI:42548"/>
        <dbReference type="ChEBI" id="CHEBI:42589"/>
        <dbReference type="EC" id="5.1.3.29"/>
    </reaction>
</comment>
<comment type="pathway">
    <text evidence="1">Carbohydrate metabolism; L-fucose metabolism.</text>
</comment>
<comment type="subunit">
    <text evidence="1">Homodecamer.</text>
</comment>
<comment type="subcellular location">
    <subcellularLocation>
        <location evidence="1">Cytoplasm</location>
    </subcellularLocation>
</comment>
<comment type="similarity">
    <text evidence="1">Belongs to the RbsD / FucU family. FucU mutarotase subfamily.</text>
</comment>
<dbReference type="EC" id="5.1.3.29" evidence="1"/>
<dbReference type="EMBL" id="AE014613">
    <property type="protein sequence ID" value="AAO70442.1"/>
    <property type="molecule type" value="Genomic_DNA"/>
</dbReference>
<dbReference type="EMBL" id="AL513382">
    <property type="protein sequence ID" value="CAD02804.1"/>
    <property type="molecule type" value="Genomic_DNA"/>
</dbReference>
<dbReference type="RefSeq" id="NP_457373.1">
    <property type="nucleotide sequence ID" value="NC_003198.1"/>
</dbReference>
<dbReference type="RefSeq" id="WP_000920848.1">
    <property type="nucleotide sequence ID" value="NZ_WSUR01000005.1"/>
</dbReference>
<dbReference type="SMR" id="Q8Z427"/>
<dbReference type="STRING" id="220341.gene:17587002"/>
<dbReference type="KEGG" id="stt:t2886"/>
<dbReference type="KEGG" id="sty:STY3118"/>
<dbReference type="PATRIC" id="fig|220341.7.peg.3173"/>
<dbReference type="eggNOG" id="COG4154">
    <property type="taxonomic scope" value="Bacteria"/>
</dbReference>
<dbReference type="HOGENOM" id="CLU_120075_1_0_6"/>
<dbReference type="OMA" id="PVWDTYT"/>
<dbReference type="OrthoDB" id="7947972at2"/>
<dbReference type="UniPathway" id="UPA00956"/>
<dbReference type="Proteomes" id="UP000000541">
    <property type="component" value="Chromosome"/>
</dbReference>
<dbReference type="Proteomes" id="UP000002670">
    <property type="component" value="Chromosome"/>
</dbReference>
<dbReference type="GO" id="GO:0005737">
    <property type="term" value="C:cytoplasm"/>
    <property type="evidence" value="ECO:0007669"/>
    <property type="project" value="UniProtKB-SubCell"/>
</dbReference>
<dbReference type="GO" id="GO:0042806">
    <property type="term" value="F:fucose binding"/>
    <property type="evidence" value="ECO:0007669"/>
    <property type="project" value="InterPro"/>
</dbReference>
<dbReference type="GO" id="GO:0036373">
    <property type="term" value="F:L-fucose mutarotase activity"/>
    <property type="evidence" value="ECO:0007669"/>
    <property type="project" value="UniProtKB-EC"/>
</dbReference>
<dbReference type="GO" id="GO:0036065">
    <property type="term" value="P:fucosylation"/>
    <property type="evidence" value="ECO:0007669"/>
    <property type="project" value="TreeGrafter"/>
</dbReference>
<dbReference type="GO" id="GO:0042354">
    <property type="term" value="P:L-fucose metabolic process"/>
    <property type="evidence" value="ECO:0007669"/>
    <property type="project" value="UniProtKB-UniRule"/>
</dbReference>
<dbReference type="FunFam" id="3.40.1650.10:FF:000001">
    <property type="entry name" value="L-fucose mutarotase"/>
    <property type="match status" value="1"/>
</dbReference>
<dbReference type="Gene3D" id="3.40.1650.10">
    <property type="entry name" value="RbsD-like domain"/>
    <property type="match status" value="1"/>
</dbReference>
<dbReference type="HAMAP" id="MF_01662">
    <property type="entry name" value="L_fucose_rotase"/>
    <property type="match status" value="1"/>
</dbReference>
<dbReference type="InterPro" id="IPR023751">
    <property type="entry name" value="L-fucose_mutarotase"/>
</dbReference>
<dbReference type="InterPro" id="IPR023750">
    <property type="entry name" value="RbsD-like_sf"/>
</dbReference>
<dbReference type="InterPro" id="IPR050443">
    <property type="entry name" value="RbsD/FucU_mutarotase"/>
</dbReference>
<dbReference type="InterPro" id="IPR007721">
    <property type="entry name" value="RbsD_FucU"/>
</dbReference>
<dbReference type="NCBIfam" id="NF011949">
    <property type="entry name" value="PRK15420.1"/>
    <property type="match status" value="1"/>
</dbReference>
<dbReference type="PANTHER" id="PTHR31690">
    <property type="entry name" value="FUCOSE MUTAROTASE"/>
    <property type="match status" value="1"/>
</dbReference>
<dbReference type="PANTHER" id="PTHR31690:SF4">
    <property type="entry name" value="FUCOSE MUTAROTASE"/>
    <property type="match status" value="1"/>
</dbReference>
<dbReference type="Pfam" id="PF05025">
    <property type="entry name" value="RbsD_FucU"/>
    <property type="match status" value="1"/>
</dbReference>
<dbReference type="SUPFAM" id="SSF102546">
    <property type="entry name" value="RbsD-like"/>
    <property type="match status" value="1"/>
</dbReference>
<gene>
    <name evidence="1" type="primary">fucU</name>
    <name type="ordered locus">STY3118</name>
    <name type="ordered locus">t2886</name>
</gene>
<accession>Q8Z427</accession>
<accession>Q7C7H3</accession>
<evidence type="ECO:0000255" key="1">
    <source>
        <dbReference type="HAMAP-Rule" id="MF_01662"/>
    </source>
</evidence>
<feature type="chain" id="PRO_1000187202" description="L-fucose mutarotase">
    <location>
        <begin position="1"/>
        <end position="140"/>
    </location>
</feature>
<feature type="active site" description="Proton donor" evidence="1">
    <location>
        <position position="22"/>
    </location>
</feature>
<feature type="binding site" evidence="1">
    <location>
        <position position="30"/>
    </location>
    <ligand>
        <name>substrate</name>
    </ligand>
</feature>
<feature type="binding site" evidence="1">
    <location>
        <position position="107"/>
    </location>
    <ligand>
        <name>substrate</name>
    </ligand>
</feature>
<feature type="binding site" evidence="1">
    <location>
        <begin position="129"/>
        <end position="131"/>
    </location>
    <ligand>
        <name>substrate</name>
    </ligand>
</feature>